<reference key="1">
    <citation type="journal article" date="1997" name="Nature">
        <title>The complete genome sequence of the gastric pathogen Helicobacter pylori.</title>
        <authorList>
            <person name="Tomb J.-F."/>
            <person name="White O."/>
            <person name="Kerlavage A.R."/>
            <person name="Clayton R.A."/>
            <person name="Sutton G.G."/>
            <person name="Fleischmann R.D."/>
            <person name="Ketchum K.A."/>
            <person name="Klenk H.-P."/>
            <person name="Gill S.R."/>
            <person name="Dougherty B.A."/>
            <person name="Nelson K.E."/>
            <person name="Quackenbush J."/>
            <person name="Zhou L."/>
            <person name="Kirkness E.F."/>
            <person name="Peterson S.N."/>
            <person name="Loftus B.J."/>
            <person name="Richardson D.L."/>
            <person name="Dodson R.J."/>
            <person name="Khalak H.G."/>
            <person name="Glodek A."/>
            <person name="McKenney K."/>
            <person name="FitzGerald L.M."/>
            <person name="Lee N."/>
            <person name="Adams M.D."/>
            <person name="Hickey E.K."/>
            <person name="Berg D.E."/>
            <person name="Gocayne J.D."/>
            <person name="Utterback T.R."/>
            <person name="Peterson J.D."/>
            <person name="Kelley J.M."/>
            <person name="Cotton M.D."/>
            <person name="Weidman J.F."/>
            <person name="Fujii C."/>
            <person name="Bowman C."/>
            <person name="Watthey L."/>
            <person name="Wallin E."/>
            <person name="Hayes W.S."/>
            <person name="Borodovsky M."/>
            <person name="Karp P.D."/>
            <person name="Smith H.O."/>
            <person name="Fraser C.M."/>
            <person name="Venter J.C."/>
        </authorList>
    </citation>
    <scope>NUCLEOTIDE SEQUENCE [LARGE SCALE GENOMIC DNA]</scope>
    <source>
        <strain>ATCC 700392 / 26695</strain>
    </source>
</reference>
<sequence length="148" mass="17147">MDTPNKDDSIIRFSVSLQQNLLDELDNRIIKNGYSSRSELVRDMIREKLVEDNWAEDNPNDESKIAVLVVIYDHHQRELNQRMIDIQHASGTHVLCTTHIHMDEHNCLETIILQGNSFEIQRLQLEIGGLRGVKFAKLTKASSFEYNE</sequence>
<dbReference type="EMBL" id="AE000511">
    <property type="protein sequence ID" value="AAD08380.1"/>
    <property type="molecule type" value="Genomic_DNA"/>
</dbReference>
<dbReference type="PIR" id="B64687">
    <property type="entry name" value="B64687"/>
</dbReference>
<dbReference type="RefSeq" id="NP_208130.1">
    <property type="nucleotide sequence ID" value="NC_000915.1"/>
</dbReference>
<dbReference type="PDB" id="2CA9">
    <property type="method" value="X-ray"/>
    <property type="resolution" value="2.05 A"/>
    <property type="chains" value="A/B=1-148"/>
</dbReference>
<dbReference type="PDB" id="2CAD">
    <property type="method" value="X-ray"/>
    <property type="resolution" value="2.30 A"/>
    <property type="chains" value="A/B=1-148"/>
</dbReference>
<dbReference type="PDB" id="2CAJ">
    <property type="method" value="X-ray"/>
    <property type="resolution" value="2.35 A"/>
    <property type="chains" value="A/B=1-148"/>
</dbReference>
<dbReference type="PDB" id="2WVB">
    <property type="method" value="X-ray"/>
    <property type="resolution" value="1.90 A"/>
    <property type="chains" value="A/B=1-148"/>
</dbReference>
<dbReference type="PDB" id="2WVC">
    <property type="method" value="X-ray"/>
    <property type="resolution" value="2.10 A"/>
    <property type="chains" value="A/B=1-148"/>
</dbReference>
<dbReference type="PDB" id="2WVD">
    <property type="method" value="X-ray"/>
    <property type="resolution" value="2.65 A"/>
    <property type="chains" value="A/B/C/D=1-148"/>
</dbReference>
<dbReference type="PDB" id="2WVE">
    <property type="method" value="X-ray"/>
    <property type="resolution" value="2.30 A"/>
    <property type="chains" value="A/B=1-148"/>
</dbReference>
<dbReference type="PDB" id="2WVF">
    <property type="method" value="X-ray"/>
    <property type="resolution" value="1.60 A"/>
    <property type="chains" value="A/B=1-148"/>
</dbReference>
<dbReference type="PDB" id="3LGH">
    <property type="method" value="X-ray"/>
    <property type="resolution" value="2.37 A"/>
    <property type="chains" value="A/B/C/D=1-148"/>
</dbReference>
<dbReference type="PDB" id="3PHT">
    <property type="method" value="X-ray"/>
    <property type="resolution" value="2.04 A"/>
    <property type="chains" value="A/B=1-148"/>
</dbReference>
<dbReference type="PDB" id="3QSI">
    <property type="method" value="X-ray"/>
    <property type="resolution" value="3.08 A"/>
    <property type="chains" value="A/B/C/D/E/F/G/H/I/J=61-148"/>
</dbReference>
<dbReference type="PDB" id="6MRJ">
    <property type="method" value="X-ray"/>
    <property type="resolution" value="2.80 A"/>
    <property type="chains" value="A/B/C/D=1-148"/>
</dbReference>
<dbReference type="PDBsum" id="2CA9"/>
<dbReference type="PDBsum" id="2CAD"/>
<dbReference type="PDBsum" id="2CAJ"/>
<dbReference type="PDBsum" id="2WVB"/>
<dbReference type="PDBsum" id="2WVC"/>
<dbReference type="PDBsum" id="2WVD"/>
<dbReference type="PDBsum" id="2WVE"/>
<dbReference type="PDBsum" id="2WVF"/>
<dbReference type="PDBsum" id="3LGH"/>
<dbReference type="PDBsum" id="3PHT"/>
<dbReference type="PDBsum" id="3QSI"/>
<dbReference type="PDBsum" id="6MRJ"/>
<dbReference type="BMRB" id="O25896"/>
<dbReference type="SMR" id="O25896"/>
<dbReference type="DIP" id="DIP-3711N"/>
<dbReference type="FunCoup" id="O25896">
    <property type="interactions" value="19"/>
</dbReference>
<dbReference type="IntAct" id="O25896">
    <property type="interactions" value="3"/>
</dbReference>
<dbReference type="MINT" id="O25896"/>
<dbReference type="STRING" id="85962.HP_1338"/>
<dbReference type="PaxDb" id="85962-C694_06905"/>
<dbReference type="EnsemblBacteria" id="AAD08380">
    <property type="protein sequence ID" value="AAD08380"/>
    <property type="gene ID" value="HP_1338"/>
</dbReference>
<dbReference type="KEGG" id="heo:C694_06905"/>
<dbReference type="KEGG" id="hpy:HP_1338"/>
<dbReference type="PATRIC" id="fig|85962.47.peg.1433"/>
<dbReference type="eggNOG" id="COG0864">
    <property type="taxonomic scope" value="Bacteria"/>
</dbReference>
<dbReference type="InParanoid" id="O25896"/>
<dbReference type="OrthoDB" id="9806294at2"/>
<dbReference type="PhylomeDB" id="O25896"/>
<dbReference type="EvolutionaryTrace" id="O25896"/>
<dbReference type="Proteomes" id="UP000000429">
    <property type="component" value="Chromosome"/>
</dbReference>
<dbReference type="CollecTF" id="EXPREG_00000670"/>
<dbReference type="GO" id="GO:0032993">
    <property type="term" value="C:protein-DNA complex"/>
    <property type="evidence" value="ECO:0000314"/>
    <property type="project" value="CollecTF"/>
</dbReference>
<dbReference type="GO" id="GO:0003677">
    <property type="term" value="F:DNA binding"/>
    <property type="evidence" value="ECO:0000318"/>
    <property type="project" value="GO_Central"/>
</dbReference>
<dbReference type="GO" id="GO:0001217">
    <property type="term" value="F:DNA-binding transcription repressor activity"/>
    <property type="evidence" value="ECO:0000315"/>
    <property type="project" value="CollecTF"/>
</dbReference>
<dbReference type="GO" id="GO:0042802">
    <property type="term" value="F:identical protein binding"/>
    <property type="evidence" value="ECO:0000353"/>
    <property type="project" value="IntAct"/>
</dbReference>
<dbReference type="GO" id="GO:0016151">
    <property type="term" value="F:nickel cation binding"/>
    <property type="evidence" value="ECO:0007669"/>
    <property type="project" value="UniProtKB-UniRule"/>
</dbReference>
<dbReference type="GO" id="GO:0043565">
    <property type="term" value="F:sequence-specific DNA binding"/>
    <property type="evidence" value="ECO:0000314"/>
    <property type="project" value="CollecTF"/>
</dbReference>
<dbReference type="GO" id="GO:0000976">
    <property type="term" value="F:transcription cis-regulatory region binding"/>
    <property type="evidence" value="ECO:0000315"/>
    <property type="project" value="CollecTF"/>
</dbReference>
<dbReference type="GO" id="GO:0045892">
    <property type="term" value="P:negative regulation of DNA-templated transcription"/>
    <property type="evidence" value="ECO:0000270"/>
    <property type="project" value="CollecTF"/>
</dbReference>
<dbReference type="GO" id="GO:0006355">
    <property type="term" value="P:regulation of DNA-templated transcription"/>
    <property type="evidence" value="ECO:0000318"/>
    <property type="project" value="GO_Central"/>
</dbReference>
<dbReference type="GO" id="GO:0010045">
    <property type="term" value="P:response to nickel cation"/>
    <property type="evidence" value="ECO:0007669"/>
    <property type="project" value="InterPro"/>
</dbReference>
<dbReference type="CDD" id="cd22231">
    <property type="entry name" value="RHH_NikR_HicB-like"/>
    <property type="match status" value="1"/>
</dbReference>
<dbReference type="FunFam" id="1.10.1220.10:FF:000010">
    <property type="entry name" value="Putative nickel-responsive regulator"/>
    <property type="match status" value="1"/>
</dbReference>
<dbReference type="FunFam" id="3.30.70.1150:FF:000004">
    <property type="entry name" value="Putative nickel-responsive regulator"/>
    <property type="match status" value="1"/>
</dbReference>
<dbReference type="Gene3D" id="3.30.70.1150">
    <property type="entry name" value="ACT-like. Chain A, domain 2"/>
    <property type="match status" value="1"/>
</dbReference>
<dbReference type="Gene3D" id="1.10.1220.10">
    <property type="entry name" value="Met repressor-like"/>
    <property type="match status" value="1"/>
</dbReference>
<dbReference type="HAMAP" id="MF_00476">
    <property type="entry name" value="NikR"/>
    <property type="match status" value="1"/>
</dbReference>
<dbReference type="InterPro" id="IPR027271">
    <property type="entry name" value="Acetolactate_synth/TF_NikR_C"/>
</dbReference>
<dbReference type="InterPro" id="IPR045865">
    <property type="entry name" value="ACT-like_dom_sf"/>
</dbReference>
<dbReference type="InterPro" id="IPR013321">
    <property type="entry name" value="Arc_rbn_hlx_hlx"/>
</dbReference>
<dbReference type="InterPro" id="IPR002145">
    <property type="entry name" value="CopG"/>
</dbReference>
<dbReference type="InterPro" id="IPR050192">
    <property type="entry name" value="CopG/NikR_regulator"/>
</dbReference>
<dbReference type="InterPro" id="IPR022988">
    <property type="entry name" value="Ni_resp_reg_NikR"/>
</dbReference>
<dbReference type="InterPro" id="IPR010985">
    <property type="entry name" value="Ribbon_hlx_hlx"/>
</dbReference>
<dbReference type="InterPro" id="IPR014864">
    <property type="entry name" value="TF_NikR_Ni-bd_C"/>
</dbReference>
<dbReference type="NCBIfam" id="NF001884">
    <property type="entry name" value="PRK00630.1"/>
    <property type="match status" value="1"/>
</dbReference>
<dbReference type="NCBIfam" id="NF002169">
    <property type="entry name" value="PRK01002.1"/>
    <property type="match status" value="1"/>
</dbReference>
<dbReference type="NCBIfam" id="NF002815">
    <property type="entry name" value="PRK02967.1"/>
    <property type="match status" value="1"/>
</dbReference>
<dbReference type="NCBIfam" id="NF003381">
    <property type="entry name" value="PRK04460.1"/>
    <property type="match status" value="1"/>
</dbReference>
<dbReference type="PANTHER" id="PTHR34719">
    <property type="entry name" value="NICKEL-RESPONSIVE REGULATOR"/>
    <property type="match status" value="1"/>
</dbReference>
<dbReference type="PANTHER" id="PTHR34719:SF2">
    <property type="entry name" value="NICKEL-RESPONSIVE REGULATOR"/>
    <property type="match status" value="1"/>
</dbReference>
<dbReference type="Pfam" id="PF08753">
    <property type="entry name" value="NikR_C"/>
    <property type="match status" value="1"/>
</dbReference>
<dbReference type="Pfam" id="PF01402">
    <property type="entry name" value="RHH_1"/>
    <property type="match status" value="1"/>
</dbReference>
<dbReference type="SUPFAM" id="SSF55021">
    <property type="entry name" value="ACT-like"/>
    <property type="match status" value="1"/>
</dbReference>
<dbReference type="SUPFAM" id="SSF47598">
    <property type="entry name" value="Ribbon-helix-helix"/>
    <property type="match status" value="1"/>
</dbReference>
<keyword id="KW-0002">3D-structure</keyword>
<keyword id="KW-0238">DNA-binding</keyword>
<keyword id="KW-0479">Metal-binding</keyword>
<keyword id="KW-0533">Nickel</keyword>
<keyword id="KW-1185">Reference proteome</keyword>
<keyword id="KW-0804">Transcription</keyword>
<keyword id="KW-0805">Transcription regulation</keyword>
<accession>O25896</accession>
<protein>
    <recommendedName>
        <fullName evidence="1">Putative nickel-responsive regulator</fullName>
    </recommendedName>
</protein>
<proteinExistence type="evidence at protein level"/>
<gene>
    <name type="ordered locus">HP_1338</name>
</gene>
<evidence type="ECO:0000255" key="1">
    <source>
        <dbReference type="HAMAP-Rule" id="MF_00476"/>
    </source>
</evidence>
<evidence type="ECO:0007829" key="2">
    <source>
        <dbReference type="PDB" id="2CA9"/>
    </source>
</evidence>
<evidence type="ECO:0007829" key="3">
    <source>
        <dbReference type="PDB" id="2WVF"/>
    </source>
</evidence>
<evidence type="ECO:0007829" key="4">
    <source>
        <dbReference type="PDB" id="3QSI"/>
    </source>
</evidence>
<comment type="function">
    <text evidence="1">Transcriptional regulator.</text>
</comment>
<comment type="cofactor">
    <cofactor evidence="1">
        <name>Ni(2+)</name>
        <dbReference type="ChEBI" id="CHEBI:49786"/>
    </cofactor>
    <text evidence="1">Binds 1 nickel ion per subunit.</text>
</comment>
<comment type="subunit">
    <text evidence="1">Homotetramer.</text>
</comment>
<comment type="interaction">
    <interactant intactId="EBI-528005">
        <id>O25896</id>
    </interactant>
    <interactant intactId="EBI-528005">
        <id>O25896</id>
        <label>HP_1338</label>
    </interactant>
    <organismsDiffer>false</organismsDiffer>
    <experiments>4</experiments>
</comment>
<comment type="similarity">
    <text evidence="1">Belongs to the transcriptional regulatory CopG/NikR family.</text>
</comment>
<name>NIKR_HELPY</name>
<feature type="chain" id="PRO_0000139291" description="Putative nickel-responsive regulator">
    <location>
        <begin position="1"/>
        <end position="148"/>
    </location>
</feature>
<feature type="binding site" evidence="1">
    <location>
        <position position="88"/>
    </location>
    <ligand>
        <name>Ni(2+)</name>
        <dbReference type="ChEBI" id="CHEBI:49786"/>
    </ligand>
</feature>
<feature type="binding site" evidence="1">
    <location>
        <position position="99"/>
    </location>
    <ligand>
        <name>Ni(2+)</name>
        <dbReference type="ChEBI" id="CHEBI:49786"/>
    </ligand>
</feature>
<feature type="binding site" evidence="1">
    <location>
        <position position="101"/>
    </location>
    <ligand>
        <name>Ni(2+)</name>
        <dbReference type="ChEBI" id="CHEBI:49786"/>
    </ligand>
</feature>
<feature type="binding site" evidence="1">
    <location>
        <position position="107"/>
    </location>
    <ligand>
        <name>Ni(2+)</name>
        <dbReference type="ChEBI" id="CHEBI:49786"/>
    </ligand>
</feature>
<feature type="strand" evidence="3">
    <location>
        <begin position="10"/>
        <end position="18"/>
    </location>
</feature>
<feature type="helix" evidence="3">
    <location>
        <begin position="19"/>
        <end position="32"/>
    </location>
</feature>
<feature type="helix" evidence="3">
    <location>
        <begin position="37"/>
        <end position="50"/>
    </location>
</feature>
<feature type="helix" evidence="2">
    <location>
        <begin position="51"/>
        <end position="56"/>
    </location>
</feature>
<feature type="strand" evidence="3">
    <location>
        <begin position="64"/>
        <end position="73"/>
    </location>
</feature>
<feature type="strand" evidence="4">
    <location>
        <begin position="74"/>
        <end position="78"/>
    </location>
</feature>
<feature type="helix" evidence="3">
    <location>
        <begin position="79"/>
        <end position="89"/>
    </location>
</feature>
<feature type="strand" evidence="3">
    <location>
        <begin position="91"/>
        <end position="101"/>
    </location>
</feature>
<feature type="strand" evidence="3">
    <location>
        <begin position="103"/>
        <end position="115"/>
    </location>
</feature>
<feature type="helix" evidence="3">
    <location>
        <begin position="117"/>
        <end position="128"/>
    </location>
</feature>
<feature type="strand" evidence="3">
    <location>
        <begin position="133"/>
        <end position="141"/>
    </location>
</feature>
<feature type="helix" evidence="3">
    <location>
        <begin position="143"/>
        <end position="145"/>
    </location>
</feature>
<organism>
    <name type="scientific">Helicobacter pylori (strain ATCC 700392 / 26695)</name>
    <name type="common">Campylobacter pylori</name>
    <dbReference type="NCBI Taxonomy" id="85962"/>
    <lineage>
        <taxon>Bacteria</taxon>
        <taxon>Pseudomonadati</taxon>
        <taxon>Campylobacterota</taxon>
        <taxon>Epsilonproteobacteria</taxon>
        <taxon>Campylobacterales</taxon>
        <taxon>Helicobacteraceae</taxon>
        <taxon>Helicobacter</taxon>
    </lineage>
</organism>